<dbReference type="EC" id="1.2.1.12"/>
<dbReference type="EMBL" id="EF122472">
    <property type="protein sequence ID" value="ABL74559.1"/>
    <property type="molecule type" value="mRNA"/>
</dbReference>
<dbReference type="EMBL" id="GQ848031">
    <property type="protein sequence ID" value="ADM86844.1"/>
    <property type="molecule type" value="mRNA"/>
</dbReference>
<dbReference type="EMBL" id="AP003886">
    <property type="protein sequence ID" value="BAD08850.1"/>
    <property type="molecule type" value="Genomic_DNA"/>
</dbReference>
<dbReference type="EMBL" id="AP008214">
    <property type="protein sequence ID" value="BAF22811.1"/>
    <property type="molecule type" value="Genomic_DNA"/>
</dbReference>
<dbReference type="EMBL" id="AP014964">
    <property type="protein sequence ID" value="BAT03659.1"/>
    <property type="molecule type" value="Genomic_DNA"/>
</dbReference>
<dbReference type="EMBL" id="CM000145">
    <property type="protein sequence ID" value="EAZ41375.1"/>
    <property type="molecule type" value="Genomic_DNA"/>
</dbReference>
<dbReference type="EMBL" id="AK071097">
    <property type="protein sequence ID" value="BAG92310.1"/>
    <property type="molecule type" value="mRNA"/>
</dbReference>
<dbReference type="EMBL" id="AK103777">
    <property type="protein sequence ID" value="BAG96258.1"/>
    <property type="molecule type" value="mRNA"/>
</dbReference>
<dbReference type="RefSeq" id="XP_015650130.1">
    <property type="nucleotide sequence ID" value="XM_015794644.1"/>
</dbReference>
<dbReference type="PDB" id="3E5R">
    <property type="method" value="X-ray"/>
    <property type="resolution" value="2.30 A"/>
    <property type="chains" value="A/B/C/O=1-337"/>
</dbReference>
<dbReference type="PDB" id="3E6A">
    <property type="method" value="X-ray"/>
    <property type="resolution" value="3.77 A"/>
    <property type="chains" value="A/B/C/O=2-337"/>
</dbReference>
<dbReference type="PDB" id="3V1Y">
    <property type="method" value="X-ray"/>
    <property type="resolution" value="1.86 A"/>
    <property type="chains" value="A/B/C/O=1-337"/>
</dbReference>
<dbReference type="PDBsum" id="3E5R"/>
<dbReference type="PDBsum" id="3E6A"/>
<dbReference type="PDBsum" id="3V1Y"/>
<dbReference type="SMR" id="Q0J8A4"/>
<dbReference type="BioGRID" id="813601">
    <property type="interactions" value="1"/>
</dbReference>
<dbReference type="FunCoup" id="Q0J8A4">
    <property type="interactions" value="428"/>
</dbReference>
<dbReference type="STRING" id="39947.Q0J8A4"/>
<dbReference type="PaxDb" id="39947-Q0J8A4"/>
<dbReference type="EnsemblPlants" id="Os08t0126300-01">
    <property type="protein sequence ID" value="Os08t0126300-01"/>
    <property type="gene ID" value="Os08g0126300"/>
</dbReference>
<dbReference type="EnsemblPlants" id="Os08t0126300-02">
    <property type="protein sequence ID" value="Os08t0126300-02"/>
    <property type="gene ID" value="Os08g0126300"/>
</dbReference>
<dbReference type="Gramene" id="Os08t0126300-01">
    <property type="protein sequence ID" value="Os08t0126300-01"/>
    <property type="gene ID" value="Os08g0126300"/>
</dbReference>
<dbReference type="Gramene" id="Os08t0126300-02">
    <property type="protein sequence ID" value="Os08t0126300-02"/>
    <property type="gene ID" value="Os08g0126300"/>
</dbReference>
<dbReference type="KEGG" id="dosa:Os08g0126300"/>
<dbReference type="eggNOG" id="KOG0657">
    <property type="taxonomic scope" value="Eukaryota"/>
</dbReference>
<dbReference type="HOGENOM" id="CLU_030140_0_3_1"/>
<dbReference type="InParanoid" id="Q0J8A4"/>
<dbReference type="OMA" id="IPWDKDG"/>
<dbReference type="OrthoDB" id="1152826at2759"/>
<dbReference type="BRENDA" id="1.2.1.12">
    <property type="organism ID" value="4460"/>
</dbReference>
<dbReference type="PlantReactome" id="R-OSA-1119273">
    <property type="pathway name" value="Lysine biosynthesis I"/>
</dbReference>
<dbReference type="PlantReactome" id="R-OSA-1119283">
    <property type="pathway name" value="Lysine biosynthesis II"/>
</dbReference>
<dbReference type="PlantReactome" id="R-OSA-1119570">
    <property type="pathway name" value="Cytosolic glycolysis"/>
</dbReference>
<dbReference type="SABIO-RK" id="Q0J8A4"/>
<dbReference type="UniPathway" id="UPA00109">
    <property type="reaction ID" value="UER00184"/>
</dbReference>
<dbReference type="EvolutionaryTrace" id="Q0J8A4"/>
<dbReference type="Proteomes" id="UP000000763">
    <property type="component" value="Chromosome 8"/>
</dbReference>
<dbReference type="Proteomes" id="UP000007752">
    <property type="component" value="Chromosome 8"/>
</dbReference>
<dbReference type="Proteomes" id="UP000059680">
    <property type="component" value="Chromosome 8"/>
</dbReference>
<dbReference type="ExpressionAtlas" id="Q0J8A4">
    <property type="expression patterns" value="baseline and differential"/>
</dbReference>
<dbReference type="GO" id="GO:0005829">
    <property type="term" value="C:cytosol"/>
    <property type="evidence" value="ECO:0000318"/>
    <property type="project" value="GO_Central"/>
</dbReference>
<dbReference type="GO" id="GO:0004365">
    <property type="term" value="F:glyceraldehyde-3-phosphate dehydrogenase (NAD+) (phosphorylating) activity"/>
    <property type="evidence" value="ECO:0000318"/>
    <property type="project" value="GO_Central"/>
</dbReference>
<dbReference type="GO" id="GO:0051287">
    <property type="term" value="F:NAD binding"/>
    <property type="evidence" value="ECO:0007669"/>
    <property type="project" value="InterPro"/>
</dbReference>
<dbReference type="GO" id="GO:0050661">
    <property type="term" value="F:NADP binding"/>
    <property type="evidence" value="ECO:0007669"/>
    <property type="project" value="InterPro"/>
</dbReference>
<dbReference type="GO" id="GO:0006006">
    <property type="term" value="P:glucose metabolic process"/>
    <property type="evidence" value="ECO:0007669"/>
    <property type="project" value="InterPro"/>
</dbReference>
<dbReference type="GO" id="GO:0006096">
    <property type="term" value="P:glycolytic process"/>
    <property type="evidence" value="ECO:0000318"/>
    <property type="project" value="GO_Central"/>
</dbReference>
<dbReference type="CDD" id="cd18126">
    <property type="entry name" value="GAPDH_I_C"/>
    <property type="match status" value="1"/>
</dbReference>
<dbReference type="CDD" id="cd05214">
    <property type="entry name" value="GAPDH_I_N"/>
    <property type="match status" value="1"/>
</dbReference>
<dbReference type="FunFam" id="3.30.360.10:FF:000001">
    <property type="entry name" value="Glyceraldehyde-3-phosphate dehydrogenase"/>
    <property type="match status" value="1"/>
</dbReference>
<dbReference type="FunFam" id="3.40.50.720:FF:000020">
    <property type="entry name" value="Glyceraldehyde-3-phosphate dehydrogenase"/>
    <property type="match status" value="1"/>
</dbReference>
<dbReference type="Gene3D" id="3.30.360.10">
    <property type="entry name" value="Dihydrodipicolinate Reductase, domain 2"/>
    <property type="match status" value="1"/>
</dbReference>
<dbReference type="Gene3D" id="3.40.50.720">
    <property type="entry name" value="NAD(P)-binding Rossmann-like Domain"/>
    <property type="match status" value="1"/>
</dbReference>
<dbReference type="InterPro" id="IPR020831">
    <property type="entry name" value="GlycerAld/Erythrose_P_DH"/>
</dbReference>
<dbReference type="InterPro" id="IPR020830">
    <property type="entry name" value="GlycerAld_3-P_DH_AS"/>
</dbReference>
<dbReference type="InterPro" id="IPR020829">
    <property type="entry name" value="GlycerAld_3-P_DH_cat"/>
</dbReference>
<dbReference type="InterPro" id="IPR020828">
    <property type="entry name" value="GlycerAld_3-P_DH_NAD(P)-bd"/>
</dbReference>
<dbReference type="InterPro" id="IPR006424">
    <property type="entry name" value="Glyceraldehyde-3-P_DH_1"/>
</dbReference>
<dbReference type="InterPro" id="IPR036291">
    <property type="entry name" value="NAD(P)-bd_dom_sf"/>
</dbReference>
<dbReference type="NCBIfam" id="TIGR01534">
    <property type="entry name" value="GAPDH-I"/>
    <property type="match status" value="1"/>
</dbReference>
<dbReference type="PANTHER" id="PTHR10836">
    <property type="entry name" value="GLYCERALDEHYDE 3-PHOSPHATE DEHYDROGENASE"/>
    <property type="match status" value="1"/>
</dbReference>
<dbReference type="PANTHER" id="PTHR10836:SF133">
    <property type="entry name" value="GLYCERALDEHYDE-3-PHOSPHATE DEHYDROGENASE 1, CYTOSOLIC"/>
    <property type="match status" value="1"/>
</dbReference>
<dbReference type="Pfam" id="PF02800">
    <property type="entry name" value="Gp_dh_C"/>
    <property type="match status" value="1"/>
</dbReference>
<dbReference type="Pfam" id="PF00044">
    <property type="entry name" value="Gp_dh_N"/>
    <property type="match status" value="1"/>
</dbReference>
<dbReference type="PIRSF" id="PIRSF000149">
    <property type="entry name" value="GAP_DH"/>
    <property type="match status" value="1"/>
</dbReference>
<dbReference type="PRINTS" id="PR00078">
    <property type="entry name" value="G3PDHDRGNASE"/>
</dbReference>
<dbReference type="SMART" id="SM00846">
    <property type="entry name" value="Gp_dh_N"/>
    <property type="match status" value="1"/>
</dbReference>
<dbReference type="SUPFAM" id="SSF55347">
    <property type="entry name" value="Glyceraldehyde-3-phosphate dehydrogenase-like, C-terminal domain"/>
    <property type="match status" value="1"/>
</dbReference>
<dbReference type="SUPFAM" id="SSF51735">
    <property type="entry name" value="NAD(P)-binding Rossmann-fold domains"/>
    <property type="match status" value="1"/>
</dbReference>
<dbReference type="PROSITE" id="PS00071">
    <property type="entry name" value="GAPDH"/>
    <property type="match status" value="1"/>
</dbReference>
<reference key="1">
    <citation type="submission" date="2009-08" db="EMBL/GenBank/DDBJ databases">
        <title>Structural and expression analysis of germinating seed genes in Oryza sativa L.</title>
        <authorList>
            <person name="Yoon U.H."/>
            <person name="Kim Y.H."/>
        </authorList>
    </citation>
    <scope>NUCLEOTIDE SEQUENCE [MRNA]</scope>
    <source>
        <strain>cv. Ilpoombyeo</strain>
        <tissue>Seed</tissue>
    </source>
</reference>
<reference key="2">
    <citation type="journal article" date="2005" name="Nature">
        <title>The map-based sequence of the rice genome.</title>
        <authorList>
            <consortium name="International rice genome sequencing project (IRGSP)"/>
        </authorList>
    </citation>
    <scope>NUCLEOTIDE SEQUENCE [LARGE SCALE GENOMIC DNA]</scope>
    <source>
        <strain>cv. Nipponbare</strain>
    </source>
</reference>
<reference key="3">
    <citation type="journal article" date="2008" name="Nucleic Acids Res.">
        <title>The rice annotation project database (RAP-DB): 2008 update.</title>
        <authorList>
            <consortium name="The rice annotation project (RAP)"/>
        </authorList>
    </citation>
    <scope>GENOME REANNOTATION</scope>
    <source>
        <strain>cv. Nipponbare</strain>
    </source>
</reference>
<reference key="4">
    <citation type="journal article" date="2013" name="Rice">
        <title>Improvement of the Oryza sativa Nipponbare reference genome using next generation sequence and optical map data.</title>
        <authorList>
            <person name="Kawahara Y."/>
            <person name="de la Bastide M."/>
            <person name="Hamilton J.P."/>
            <person name="Kanamori H."/>
            <person name="McCombie W.R."/>
            <person name="Ouyang S."/>
            <person name="Schwartz D.C."/>
            <person name="Tanaka T."/>
            <person name="Wu J."/>
            <person name="Zhou S."/>
            <person name="Childs K.L."/>
            <person name="Davidson R.M."/>
            <person name="Lin H."/>
            <person name="Quesada-Ocampo L."/>
            <person name="Vaillancourt B."/>
            <person name="Sakai H."/>
            <person name="Lee S.S."/>
            <person name="Kim J."/>
            <person name="Numa H."/>
            <person name="Itoh T."/>
            <person name="Buell C.R."/>
            <person name="Matsumoto T."/>
        </authorList>
    </citation>
    <scope>GENOME REANNOTATION</scope>
    <source>
        <strain>cv. Nipponbare</strain>
    </source>
</reference>
<reference key="5">
    <citation type="journal article" date="2005" name="PLoS Biol.">
        <title>The genomes of Oryza sativa: a history of duplications.</title>
        <authorList>
            <person name="Yu J."/>
            <person name="Wang J."/>
            <person name="Lin W."/>
            <person name="Li S."/>
            <person name="Li H."/>
            <person name="Zhou J."/>
            <person name="Ni P."/>
            <person name="Dong W."/>
            <person name="Hu S."/>
            <person name="Zeng C."/>
            <person name="Zhang J."/>
            <person name="Zhang Y."/>
            <person name="Li R."/>
            <person name="Xu Z."/>
            <person name="Li S."/>
            <person name="Li X."/>
            <person name="Zheng H."/>
            <person name="Cong L."/>
            <person name="Lin L."/>
            <person name="Yin J."/>
            <person name="Geng J."/>
            <person name="Li G."/>
            <person name="Shi J."/>
            <person name="Liu J."/>
            <person name="Lv H."/>
            <person name="Li J."/>
            <person name="Wang J."/>
            <person name="Deng Y."/>
            <person name="Ran L."/>
            <person name="Shi X."/>
            <person name="Wang X."/>
            <person name="Wu Q."/>
            <person name="Li C."/>
            <person name="Ren X."/>
            <person name="Wang J."/>
            <person name="Wang X."/>
            <person name="Li D."/>
            <person name="Liu D."/>
            <person name="Zhang X."/>
            <person name="Ji Z."/>
            <person name="Zhao W."/>
            <person name="Sun Y."/>
            <person name="Zhang Z."/>
            <person name="Bao J."/>
            <person name="Han Y."/>
            <person name="Dong L."/>
            <person name="Ji J."/>
            <person name="Chen P."/>
            <person name="Wu S."/>
            <person name="Liu J."/>
            <person name="Xiao Y."/>
            <person name="Bu D."/>
            <person name="Tan J."/>
            <person name="Yang L."/>
            <person name="Ye C."/>
            <person name="Zhang J."/>
            <person name="Xu J."/>
            <person name="Zhou Y."/>
            <person name="Yu Y."/>
            <person name="Zhang B."/>
            <person name="Zhuang S."/>
            <person name="Wei H."/>
            <person name="Liu B."/>
            <person name="Lei M."/>
            <person name="Yu H."/>
            <person name="Li Y."/>
            <person name="Xu H."/>
            <person name="Wei S."/>
            <person name="He X."/>
            <person name="Fang L."/>
            <person name="Zhang Z."/>
            <person name="Zhang Y."/>
            <person name="Huang X."/>
            <person name="Su Z."/>
            <person name="Tong W."/>
            <person name="Li J."/>
            <person name="Tong Z."/>
            <person name="Li S."/>
            <person name="Ye J."/>
            <person name="Wang L."/>
            <person name="Fang L."/>
            <person name="Lei T."/>
            <person name="Chen C.-S."/>
            <person name="Chen H.-C."/>
            <person name="Xu Z."/>
            <person name="Li H."/>
            <person name="Huang H."/>
            <person name="Zhang F."/>
            <person name="Xu H."/>
            <person name="Li N."/>
            <person name="Zhao C."/>
            <person name="Li S."/>
            <person name="Dong L."/>
            <person name="Huang Y."/>
            <person name="Li L."/>
            <person name="Xi Y."/>
            <person name="Qi Q."/>
            <person name="Li W."/>
            <person name="Zhang B."/>
            <person name="Hu W."/>
            <person name="Zhang Y."/>
            <person name="Tian X."/>
            <person name="Jiao Y."/>
            <person name="Liang X."/>
            <person name="Jin J."/>
            <person name="Gao L."/>
            <person name="Zheng W."/>
            <person name="Hao B."/>
            <person name="Liu S.-M."/>
            <person name="Wang W."/>
            <person name="Yuan L."/>
            <person name="Cao M."/>
            <person name="McDermott J."/>
            <person name="Samudrala R."/>
            <person name="Wang J."/>
            <person name="Wong G.K.-S."/>
            <person name="Yang H."/>
        </authorList>
    </citation>
    <scope>NUCLEOTIDE SEQUENCE [LARGE SCALE GENOMIC DNA]</scope>
    <source>
        <strain>cv. Nipponbare</strain>
    </source>
</reference>
<reference key="6">
    <citation type="journal article" date="2003" name="Science">
        <title>Collection, mapping, and annotation of over 28,000 cDNA clones from japonica rice.</title>
        <authorList>
            <consortium name="The rice full-length cDNA consortium"/>
        </authorList>
    </citation>
    <scope>NUCLEOTIDE SEQUENCE [LARGE SCALE MRNA]</scope>
    <source>
        <strain>cv. Nipponbare</strain>
    </source>
</reference>
<reference key="7">
    <citation type="journal article" date="2004" name="Nucleic Acids Res.">
        <title>Rice proteome database based on two-dimensional polyacrylamide gel electrophoresis: its status in 2003.</title>
        <authorList>
            <person name="Komatsu S."/>
            <person name="Kojima K."/>
            <person name="Suzuki K."/>
            <person name="Ozaki K."/>
            <person name="Higo K."/>
        </authorList>
    </citation>
    <scope>PROTEIN SEQUENCE OF 2-11; 30-39 AND 140-149</scope>
    <source>
        <strain>cv. Nipponbare</strain>
        <tissue>Anther</tissue>
        <tissue>Callus</tissue>
        <tissue>Embryo</tissue>
        <tissue>Panicle</tissue>
        <tissue>Stem</tissue>
    </source>
</reference>
<reference key="8">
    <citation type="journal article" date="2005" name="Plant Mol. Biol.">
        <title>Identification of phosphoproteins regulated by gibberellin in rice leaf sheath.</title>
        <authorList>
            <person name="Khan M.M.K."/>
            <person name="Jan A."/>
            <person name="Karibe H."/>
            <person name="Komatsu S."/>
        </authorList>
    </citation>
    <scope>IDENTIFICATION BY MASS SPECTROMETRY</scope>
    <scope>INDUCTION</scope>
    <scope>PHOSPHORYLATION</scope>
    <source>
        <strain>cv. Nipponbare</strain>
    </source>
</reference>
<reference key="9">
    <citation type="journal article" date="2012" name="Plant Mol. Biol.">
        <title>Crystal structures of rice (Oryza sativa) glyceraldehyde-3-phosphate dehydrogenase complexes with NAD and sulfate suggest involvement of Phe37 in NAD binding for catalysis.</title>
        <authorList>
            <person name="Tien Y.C."/>
            <person name="Chuankhayan P."/>
            <person name="Huang Y.C."/>
            <person name="Chen C.D."/>
            <person name="Alikhajeh J."/>
            <person name="Chang S.L."/>
            <person name="Chen C.J."/>
        </authorList>
    </citation>
    <scope>X-RAY CRYSTALLOGRAPHY (2.30 ANGSTROMS) IN COMPLEX WITH NAD</scope>
    <scope>SUBUNIT</scope>
    <scope>BIOPHYSICOCHEMICAL PROPERTIES</scope>
    <scope>MUTAGENESIS OF PHE-37</scope>
</reference>
<organism>
    <name type="scientific">Oryza sativa subsp. japonica</name>
    <name type="common">Rice</name>
    <dbReference type="NCBI Taxonomy" id="39947"/>
    <lineage>
        <taxon>Eukaryota</taxon>
        <taxon>Viridiplantae</taxon>
        <taxon>Streptophyta</taxon>
        <taxon>Embryophyta</taxon>
        <taxon>Tracheophyta</taxon>
        <taxon>Spermatophyta</taxon>
        <taxon>Magnoliopsida</taxon>
        <taxon>Liliopsida</taxon>
        <taxon>Poales</taxon>
        <taxon>Poaceae</taxon>
        <taxon>BOP clade</taxon>
        <taxon>Oryzoideae</taxon>
        <taxon>Oryzeae</taxon>
        <taxon>Oryzinae</taxon>
        <taxon>Oryza</taxon>
        <taxon>Oryza sativa</taxon>
    </lineage>
</organism>
<name>G3PC1_ORYSJ</name>
<feature type="initiator methionine" description="Removed" evidence="3">
    <location>
        <position position="1"/>
    </location>
</feature>
<feature type="chain" id="PRO_0000145609" description="Glyceraldehyde-3-phosphate dehydrogenase 1, cytosolic">
    <location>
        <begin position="2"/>
        <end position="337"/>
    </location>
</feature>
<feature type="active site" description="Nucleophile" evidence="2">
    <location>
        <position position="154"/>
    </location>
</feature>
<feature type="binding site" evidence="5">
    <location>
        <begin position="13"/>
        <end position="14"/>
    </location>
    <ligand>
        <name>NAD(+)</name>
        <dbReference type="ChEBI" id="CHEBI:57540"/>
    </ligand>
</feature>
<feature type="binding site" evidence="5">
    <location>
        <position position="35"/>
    </location>
    <ligand>
        <name>NAD(+)</name>
        <dbReference type="ChEBI" id="CHEBI:57540"/>
    </ligand>
</feature>
<feature type="binding site" evidence="5">
    <location>
        <position position="82"/>
    </location>
    <ligand>
        <name>NAD(+)</name>
        <dbReference type="ChEBI" id="CHEBI:57540"/>
    </ligand>
</feature>
<feature type="binding site" evidence="1">
    <location>
        <begin position="153"/>
        <end position="155"/>
    </location>
    <ligand>
        <name>D-glyceraldehyde 3-phosphate</name>
        <dbReference type="ChEBI" id="CHEBI:59776"/>
    </ligand>
</feature>
<feature type="binding site" evidence="1">
    <location>
        <position position="184"/>
    </location>
    <ligand>
        <name>D-glyceraldehyde 3-phosphate</name>
        <dbReference type="ChEBI" id="CHEBI:59776"/>
    </ligand>
</feature>
<feature type="binding site" evidence="1">
    <location>
        <begin position="213"/>
        <end position="214"/>
    </location>
    <ligand>
        <name>D-glyceraldehyde 3-phosphate</name>
        <dbReference type="ChEBI" id="CHEBI:59776"/>
    </ligand>
</feature>
<feature type="binding site" evidence="1">
    <location>
        <position position="236"/>
    </location>
    <ligand>
        <name>D-glyceraldehyde 3-phosphate</name>
        <dbReference type="ChEBI" id="CHEBI:59776"/>
    </ligand>
</feature>
<feature type="binding site" evidence="1">
    <location>
        <position position="318"/>
    </location>
    <ligand>
        <name>NAD(+)</name>
        <dbReference type="ChEBI" id="CHEBI:57540"/>
    </ligand>
</feature>
<feature type="site" description="Activates thiol group during catalysis" evidence="1">
    <location>
        <position position="181"/>
    </location>
</feature>
<feature type="mutagenesis site" description="7-fold decrease in affinity toward NAD. More than 500-fold decrease in catalytic efficiency." evidence="5">
    <original>F</original>
    <variation>G</variation>
    <variation>T</variation>
    <location>
        <position position="37"/>
    </location>
</feature>
<feature type="mutagenesis site" description="9-fold decrease in affinity toward NAD. More than 1000-fold decrease in catalytic efficiency." evidence="5">
    <original>F</original>
    <variation>L</variation>
    <location>
        <position position="37"/>
    </location>
</feature>
<feature type="strand" evidence="8">
    <location>
        <begin position="4"/>
        <end position="9"/>
    </location>
</feature>
<feature type="helix" evidence="8">
    <location>
        <begin position="13"/>
        <end position="23"/>
    </location>
</feature>
<feature type="strand" evidence="8">
    <location>
        <begin position="26"/>
        <end position="34"/>
    </location>
</feature>
<feature type="strand" evidence="7">
    <location>
        <begin position="36"/>
        <end position="38"/>
    </location>
</feature>
<feature type="helix" evidence="8">
    <location>
        <begin position="40"/>
        <end position="48"/>
    </location>
</feature>
<feature type="turn" evidence="8">
    <location>
        <begin position="51"/>
        <end position="53"/>
    </location>
</feature>
<feature type="strand" evidence="8">
    <location>
        <begin position="61"/>
        <end position="65"/>
    </location>
</feature>
<feature type="strand" evidence="8">
    <location>
        <begin position="68"/>
        <end position="71"/>
    </location>
</feature>
<feature type="strand" evidence="8">
    <location>
        <begin position="74"/>
        <end position="79"/>
    </location>
</feature>
<feature type="helix" evidence="8">
    <location>
        <begin position="84"/>
        <end position="86"/>
    </location>
</feature>
<feature type="helix" evidence="8">
    <location>
        <begin position="89"/>
        <end position="92"/>
    </location>
</feature>
<feature type="strand" evidence="8">
    <location>
        <begin position="96"/>
        <end position="99"/>
    </location>
</feature>
<feature type="strand" evidence="8">
    <location>
        <begin position="101"/>
        <end position="103"/>
    </location>
</feature>
<feature type="helix" evidence="8">
    <location>
        <begin position="107"/>
        <end position="110"/>
    </location>
</feature>
<feature type="helix" evidence="8">
    <location>
        <begin position="112"/>
        <end position="115"/>
    </location>
</feature>
<feature type="strand" evidence="8">
    <location>
        <begin position="120"/>
        <end position="125"/>
    </location>
</feature>
<feature type="strand" evidence="8">
    <location>
        <begin position="128"/>
        <end position="130"/>
    </location>
</feature>
<feature type="turn" evidence="8">
    <location>
        <begin position="135"/>
        <end position="137"/>
    </location>
</feature>
<feature type="helix" evidence="8">
    <location>
        <begin position="139"/>
        <end position="141"/>
    </location>
</feature>
<feature type="strand" evidence="8">
    <location>
        <begin position="148"/>
        <end position="150"/>
    </location>
</feature>
<feature type="helix" evidence="8">
    <location>
        <begin position="154"/>
        <end position="170"/>
    </location>
</feature>
<feature type="strand" evidence="8">
    <location>
        <begin position="172"/>
        <end position="181"/>
    </location>
</feature>
<feature type="strand" evidence="8">
    <location>
        <begin position="187"/>
        <end position="191"/>
    </location>
</feature>
<feature type="helix" evidence="8">
    <location>
        <begin position="198"/>
        <end position="201"/>
    </location>
</feature>
<feature type="helix" evidence="8">
    <location>
        <begin position="204"/>
        <end position="206"/>
    </location>
</feature>
<feature type="strand" evidence="8">
    <location>
        <begin position="209"/>
        <end position="212"/>
    </location>
</feature>
<feature type="helix" evidence="8">
    <location>
        <begin position="215"/>
        <end position="222"/>
    </location>
</feature>
<feature type="helix" evidence="8">
    <location>
        <begin position="224"/>
        <end position="226"/>
    </location>
</feature>
<feature type="strand" evidence="8">
    <location>
        <begin position="229"/>
        <end position="236"/>
    </location>
</feature>
<feature type="strand" evidence="8">
    <location>
        <begin position="243"/>
        <end position="253"/>
    </location>
</feature>
<feature type="helix" evidence="8">
    <location>
        <begin position="257"/>
        <end position="269"/>
    </location>
</feature>
<feature type="turn" evidence="8">
    <location>
        <begin position="270"/>
        <end position="272"/>
    </location>
</feature>
<feature type="strand" evidence="8">
    <location>
        <begin position="276"/>
        <end position="279"/>
    </location>
</feature>
<feature type="helix" evidence="8">
    <location>
        <begin position="285"/>
        <end position="288"/>
    </location>
</feature>
<feature type="strand" evidence="8">
    <location>
        <begin position="294"/>
        <end position="298"/>
    </location>
</feature>
<feature type="turn" evidence="8">
    <location>
        <begin position="299"/>
        <end position="301"/>
    </location>
</feature>
<feature type="strand" evidence="8">
    <location>
        <begin position="303"/>
        <end position="306"/>
    </location>
</feature>
<feature type="strand" evidence="8">
    <location>
        <begin position="309"/>
        <end position="316"/>
    </location>
</feature>
<feature type="helix" evidence="8">
    <location>
        <begin position="320"/>
        <end position="335"/>
    </location>
</feature>
<accession>Q0J8A4</accession>
<accession>B7EIW3</accession>
<accession>Q42977</accession>
<accession>Q6ZK60</accession>
<protein>
    <recommendedName>
        <fullName>Glyceraldehyde-3-phosphate dehydrogenase 1, cytosolic</fullName>
        <ecNumber>1.2.1.12</ecNumber>
    </recommendedName>
    <alternativeName>
        <fullName>PP38</fullName>
    </alternativeName>
</protein>
<comment type="function">
    <text evidence="1">Key enzyme in glycolysis that catalyzes the first step of the pathway by converting D-glyceraldehyde 3-phosphate (G3P) into 3-phospho-D-glyceroyl phosphate. Essential for the maintenance of cellular ATP levels and carbohydrate metabolism (By similarity).</text>
</comment>
<comment type="catalytic activity">
    <reaction evidence="2">
        <text>D-glyceraldehyde 3-phosphate + phosphate + NAD(+) = (2R)-3-phospho-glyceroyl phosphate + NADH + H(+)</text>
        <dbReference type="Rhea" id="RHEA:10300"/>
        <dbReference type="ChEBI" id="CHEBI:15378"/>
        <dbReference type="ChEBI" id="CHEBI:43474"/>
        <dbReference type="ChEBI" id="CHEBI:57540"/>
        <dbReference type="ChEBI" id="CHEBI:57604"/>
        <dbReference type="ChEBI" id="CHEBI:57945"/>
        <dbReference type="ChEBI" id="CHEBI:59776"/>
        <dbReference type="EC" id="1.2.1.12"/>
    </reaction>
</comment>
<comment type="biophysicochemical properties">
    <kinetics>
        <KM evidence="5">0.061 mM for NADH</KM>
        <KM evidence="5">0.059 mM for NAD(+)</KM>
        <KM evidence="5">0.036 mM for 3-phospho-D-glyceroyl phosphate</KM>
        <KM evidence="5">0.111 mM for D-glyceraldehyde 3-phosphate</KM>
    </kinetics>
</comment>
<comment type="pathway">
    <text>Carbohydrate degradation; glycolysis; pyruvate from D-glyceraldehyde 3-phosphate: step 1/5.</text>
</comment>
<comment type="subunit">
    <text evidence="5">Homotetramer.</text>
</comment>
<comment type="subcellular location">
    <subcellularLocation>
        <location evidence="1">Cytoplasm</location>
    </subcellularLocation>
</comment>
<comment type="induction">
    <text evidence="4">By gibberellin.</text>
</comment>
<comment type="PTM">
    <text evidence="4">Phosphorylated after gibberellin treatment.</text>
</comment>
<comment type="miscellaneous">
    <text>Plants contain two types of GAPDH: cytosolic forms which participate in glycolysis and chloroplast forms which participate in photosynthesis. All the forms are encoded by distinct genes.</text>
</comment>
<comment type="similarity">
    <text evidence="6">Belongs to the glyceraldehyde-3-phosphate dehydrogenase family.</text>
</comment>
<keyword id="KW-0002">3D-structure</keyword>
<keyword id="KW-0963">Cytoplasm</keyword>
<keyword id="KW-0903">Direct protein sequencing</keyword>
<keyword id="KW-0324">Glycolysis</keyword>
<keyword id="KW-0520">NAD</keyword>
<keyword id="KW-0560">Oxidoreductase</keyword>
<keyword id="KW-1185">Reference proteome</keyword>
<proteinExistence type="evidence at protein level"/>
<evidence type="ECO:0000250" key="1"/>
<evidence type="ECO:0000255" key="2">
    <source>
        <dbReference type="PROSITE-ProRule" id="PRU10009"/>
    </source>
</evidence>
<evidence type="ECO:0000269" key="3">
    <source>
    </source>
</evidence>
<evidence type="ECO:0000269" key="4">
    <source>
    </source>
</evidence>
<evidence type="ECO:0000269" key="5">
    <source>
    </source>
</evidence>
<evidence type="ECO:0000305" key="6"/>
<evidence type="ECO:0007829" key="7">
    <source>
        <dbReference type="PDB" id="3E5R"/>
    </source>
</evidence>
<evidence type="ECO:0007829" key="8">
    <source>
        <dbReference type="PDB" id="3V1Y"/>
    </source>
</evidence>
<gene>
    <name type="primary">GAPC1</name>
    <name type="synonym">GAPC</name>
    <name type="synonym">GAPDH</name>
    <name type="synonym">GPC</name>
    <name type="ordered locus">Os08g0126300</name>
    <name type="ordered locus">LOC_Os08g03290</name>
    <name type="ORF">OJ1163_G08.15</name>
    <name type="ORF">OsJ_024858</name>
</gene>
<sequence length="337" mass="36413">MGKIKIGINGFGRIGRLVARVALQSEDVELVAVNDPFITTDYMTYMFKYDTVHGQWKHSDIKIKDSKTLLLGEKPVTVFGIRNPDEIPWAEAGAEYVVESTGVFTDKEKAAAHLKGGAKKVVISAPSKDAPMFVCGVNEDKYTSDIDIVSNASCTTNCLAPLAKVIHDNFGIIEGLMTTVHAITATQKTVDGPSSKDWRGGRAASFNIIPSSTGAAKAVGKVLPDLNGKLTGMSFRVPTVDVSVVDLTVRIEKAASYDAIKSAIKSASEGKLKGIIGYVEEDLVSTDFVGDSRSSIFDAKAGIALNDNFVKLVAWYDNEWGYSNRVIDLIRHMAKTQ</sequence>